<organism>
    <name type="scientific">Rhodospirillum rubrum (strain ATCC 11170 / ATH 1.1.1 / DSM 467 / LMG 4362 / NCIMB 8255 / S1)</name>
    <dbReference type="NCBI Taxonomy" id="269796"/>
    <lineage>
        <taxon>Bacteria</taxon>
        <taxon>Pseudomonadati</taxon>
        <taxon>Pseudomonadota</taxon>
        <taxon>Alphaproteobacteria</taxon>
        <taxon>Rhodospirillales</taxon>
        <taxon>Rhodospirillaceae</taxon>
        <taxon>Rhodospirillum</taxon>
    </lineage>
</organism>
<proteinExistence type="evidence at protein level"/>
<evidence type="ECO:0000250" key="1">
    <source>
        <dbReference type="UniProtKB" id="P00147"/>
    </source>
</evidence>
<evidence type="ECO:0000269" key="2">
    <source>
    </source>
</evidence>
<dbReference type="EMBL" id="CP000230">
    <property type="protein sequence ID" value="ABC23056.1"/>
    <property type="molecule type" value="Genomic_DNA"/>
</dbReference>
<dbReference type="PIR" id="A00137">
    <property type="entry name" value="CCQFCR"/>
</dbReference>
<dbReference type="RefSeq" id="WP_011389911.1">
    <property type="nucleotide sequence ID" value="NC_007643.1"/>
</dbReference>
<dbReference type="RefSeq" id="YP_427343.1">
    <property type="nucleotide sequence ID" value="NC_007643.1"/>
</dbReference>
<dbReference type="SMR" id="P00144"/>
<dbReference type="STRING" id="269796.Rru_A2256"/>
<dbReference type="EnsemblBacteria" id="ABC23056">
    <property type="protein sequence ID" value="ABC23056"/>
    <property type="gene ID" value="Rru_A2256"/>
</dbReference>
<dbReference type="KEGG" id="rru:Rru_A2256"/>
<dbReference type="PATRIC" id="fig|269796.9.peg.2354"/>
<dbReference type="eggNOG" id="COG3909">
    <property type="taxonomic scope" value="Bacteria"/>
</dbReference>
<dbReference type="HOGENOM" id="CLU_106713_3_0_5"/>
<dbReference type="PhylomeDB" id="P00144"/>
<dbReference type="Proteomes" id="UP000001929">
    <property type="component" value="Chromosome"/>
</dbReference>
<dbReference type="GO" id="GO:0042597">
    <property type="term" value="C:periplasmic space"/>
    <property type="evidence" value="ECO:0007669"/>
    <property type="project" value="InterPro"/>
</dbReference>
<dbReference type="GO" id="GO:0009055">
    <property type="term" value="F:electron transfer activity"/>
    <property type="evidence" value="ECO:0007669"/>
    <property type="project" value="InterPro"/>
</dbReference>
<dbReference type="GO" id="GO:0020037">
    <property type="term" value="F:heme binding"/>
    <property type="evidence" value="ECO:0007669"/>
    <property type="project" value="InterPro"/>
</dbReference>
<dbReference type="GO" id="GO:0005506">
    <property type="term" value="F:iron ion binding"/>
    <property type="evidence" value="ECO:0007669"/>
    <property type="project" value="InterPro"/>
</dbReference>
<dbReference type="GO" id="GO:0022900">
    <property type="term" value="P:electron transport chain"/>
    <property type="evidence" value="ECO:0007669"/>
    <property type="project" value="InterPro"/>
</dbReference>
<dbReference type="Gene3D" id="1.20.120.10">
    <property type="entry name" value="Cytochrome c/b562"/>
    <property type="match status" value="1"/>
</dbReference>
<dbReference type="InterPro" id="IPR010980">
    <property type="entry name" value="Cyt_c/b562"/>
</dbReference>
<dbReference type="InterPro" id="IPR002321">
    <property type="entry name" value="Cyt_c_II"/>
</dbReference>
<dbReference type="InterPro" id="IPR012127">
    <property type="entry name" value="Cyt_c_prime"/>
</dbReference>
<dbReference type="InterPro" id="IPR015984">
    <property type="entry name" value="Cyt_c_prime_subgr"/>
</dbReference>
<dbReference type="Pfam" id="PF01322">
    <property type="entry name" value="Cytochrom_C_2"/>
    <property type="match status" value="1"/>
</dbReference>
<dbReference type="PIRSF" id="PIRSF000027">
    <property type="entry name" value="Cytc_c_prime"/>
    <property type="match status" value="1"/>
</dbReference>
<dbReference type="PRINTS" id="PR00608">
    <property type="entry name" value="CYTCHROMECII"/>
</dbReference>
<dbReference type="SUPFAM" id="SSF47175">
    <property type="entry name" value="Cytochromes"/>
    <property type="match status" value="1"/>
</dbReference>
<dbReference type="PROSITE" id="PS51009">
    <property type="entry name" value="CYTCII"/>
    <property type="match status" value="1"/>
</dbReference>
<feature type="signal peptide" evidence="2">
    <location>
        <begin position="1"/>
        <end position="21"/>
    </location>
</feature>
<feature type="chain" id="PRO_0000108376" description="Cytochrome c'">
    <location>
        <begin position="22"/>
        <end position="147"/>
    </location>
</feature>
<feature type="binding site" evidence="1">
    <location>
        <position position="31"/>
    </location>
    <ligand>
        <name>heme c</name>
        <dbReference type="ChEBI" id="CHEBI:61717"/>
    </ligand>
</feature>
<feature type="binding site" evidence="1">
    <location>
        <position position="87"/>
    </location>
    <ligand>
        <name>heme c</name>
        <dbReference type="ChEBI" id="CHEBI:61717"/>
    </ligand>
</feature>
<feature type="binding site" evidence="1">
    <location>
        <position position="88"/>
    </location>
    <ligand>
        <name>heme c</name>
        <dbReference type="ChEBI" id="CHEBI:61717"/>
    </ligand>
</feature>
<feature type="binding site" description="covalent" evidence="1">
    <location>
        <position position="137"/>
    </location>
    <ligand>
        <name>heme c</name>
        <dbReference type="ChEBI" id="CHEBI:61717"/>
    </ligand>
</feature>
<feature type="binding site" description="covalent" evidence="1">
    <location>
        <position position="140"/>
    </location>
    <ligand>
        <name>heme c</name>
        <dbReference type="ChEBI" id="CHEBI:61717"/>
    </ligand>
</feature>
<feature type="binding site" description="axial binding residue" evidence="1">
    <location>
        <position position="141"/>
    </location>
    <ligand>
        <name>heme c</name>
        <dbReference type="ChEBI" id="CHEBI:61717"/>
    </ligand>
    <ligandPart>
        <name>Fe</name>
        <dbReference type="ChEBI" id="CHEBI:18248"/>
    </ligandPart>
</feature>
<sequence>MKRMMIVAALAALTTTTVAQAADPAAYVEYRKSVLSATSNYMKAIGITLKEDLAVPNQTADHAKAIASIMETLPAAFPEGTAGIAKTEAKAAIWKDFEAFKVASKKSQDAALELASAAETGDKAAIGAKLQALGGTCKACHKEFKAD</sequence>
<protein>
    <recommendedName>
        <fullName>Cytochrome c'</fullName>
    </recommendedName>
</protein>
<reference key="1">
    <citation type="journal article" date="2011" name="Stand. Genomic Sci.">
        <title>Complete genome sequence of Rhodospirillum rubrum type strain (S1).</title>
        <authorList>
            <person name="Munk A.C."/>
            <person name="Copeland A."/>
            <person name="Lucas S."/>
            <person name="Lapidus A."/>
            <person name="Del Rio T.G."/>
            <person name="Barry K."/>
            <person name="Detter J.C."/>
            <person name="Hammon N."/>
            <person name="Israni S."/>
            <person name="Pitluck S."/>
            <person name="Brettin T."/>
            <person name="Bruce D."/>
            <person name="Han C."/>
            <person name="Tapia R."/>
            <person name="Gilna P."/>
            <person name="Schmutz J."/>
            <person name="Larimer F."/>
            <person name="Land M."/>
            <person name="Kyrpides N.C."/>
            <person name="Mavromatis K."/>
            <person name="Richardson P."/>
            <person name="Rohde M."/>
            <person name="Goeker M."/>
            <person name="Klenk H.P."/>
            <person name="Zhang Y."/>
            <person name="Roberts G.P."/>
            <person name="Reslewic S."/>
            <person name="Schwartz D.C."/>
        </authorList>
    </citation>
    <scope>NUCLEOTIDE SEQUENCE [LARGE SCALE GENOMIC DNA]</scope>
    <source>
        <strain>ATCC 11170 / ATH 1.1.1 / DSM 467 / LMG 4362 / NCIMB 8255 / S1</strain>
    </source>
</reference>
<reference key="2">
    <citation type="journal article" date="1975" name="J. Biol. Chem.">
        <title>Amino acid sequence of cytochrome c' from the purple photosynthetic bacterium Rhodospirillum rubrum S1.</title>
        <authorList>
            <person name="Meyer T.E."/>
            <person name="Ambler R.P."/>
            <person name="Bartsch R.G."/>
            <person name="Kamen M.D."/>
        </authorList>
    </citation>
    <scope>PROTEIN SEQUENCE OF 22-147</scope>
</reference>
<reference key="3">
    <citation type="journal article" date="1992" name="J. Biochem.">
        <title>Three-dimensional structure of ferricytochrome c' from Rhodospirillum rubrum at 2.8-A resolution.</title>
        <authorList>
            <person name="Yasui M."/>
            <person name="Harada S."/>
            <person name="Kai Y."/>
            <person name="Kasai N."/>
            <person name="Kusunoki M."/>
            <person name="Matsuura Y."/>
        </authorList>
    </citation>
    <scope>X-RAY CRYSTALLOGRAPHY (2.8 ANGSTROMS) OF 22-147</scope>
</reference>
<gene>
    <name type="ordered locus">Rru_A2256</name>
</gene>
<keyword id="KW-0903">Direct protein sequencing</keyword>
<keyword id="KW-0249">Electron transport</keyword>
<keyword id="KW-0349">Heme</keyword>
<keyword id="KW-0408">Iron</keyword>
<keyword id="KW-0479">Metal-binding</keyword>
<keyword id="KW-1185">Reference proteome</keyword>
<keyword id="KW-0732">Signal</keyword>
<keyword id="KW-0813">Transport</keyword>
<comment type="function">
    <text>Cytochrome c' is the most widely occurring bacterial c-type cytochrome. Cytochromes c' are high-spin proteins and the heme has no sixth ligand. Their exact function is not known.</text>
</comment>
<comment type="subunit">
    <text>Homodimer.</text>
</comment>
<comment type="PTM">
    <text evidence="1">Binds 1 heme c group covalently per subunit.</text>
</comment>
<name>CYCP_RHORT</name>
<accession>P00144</accession>
<accession>Q2RS39</accession>